<evidence type="ECO:0000250" key="1"/>
<evidence type="ECO:0000255" key="2">
    <source>
        <dbReference type="PROSITE-ProRule" id="PRU10001"/>
    </source>
</evidence>
<evidence type="ECO:0000269" key="3">
    <source>
    </source>
</evidence>
<evidence type="ECO:0000303" key="4">
    <source>
    </source>
</evidence>
<evidence type="ECO:0000303" key="5">
    <source>
    </source>
</evidence>
<evidence type="ECO:0000305" key="6"/>
<evidence type="ECO:0000305" key="7">
    <source>
    </source>
</evidence>
<evidence type="ECO:0007744" key="8">
    <source>
        <dbReference type="PDB" id="4IS3"/>
    </source>
</evidence>
<evidence type="ECO:0007829" key="9">
    <source>
        <dbReference type="PDB" id="4IS2"/>
    </source>
</evidence>
<evidence type="ECO:0007829" key="10">
    <source>
        <dbReference type="PDB" id="4IS3"/>
    </source>
</evidence>
<gene>
    <name type="primary">baiA2</name>
</gene>
<keyword id="KW-0002">3D-structure</keyword>
<keyword id="KW-0443">Lipid metabolism</keyword>
<keyword id="KW-0520">NAD</keyword>
<keyword id="KW-0560">Oxidoreductase</keyword>
<keyword id="KW-0753">Steroid metabolism</keyword>
<feature type="chain" id="PRO_0000054525" description="3alpha-hydroxy bile acid-CoA-ester 3-dehydrogenase 2">
    <location>
        <begin position="1"/>
        <end position="249"/>
    </location>
</feature>
<feature type="active site" description="Proton donor/acceptor" evidence="2 7">
    <location>
        <position position="157"/>
    </location>
</feature>
<feature type="active site" description="Proton donor/acceptor" evidence="7">
    <location>
        <position position="161"/>
    </location>
</feature>
<feature type="binding site" evidence="3 8">
    <location>
        <begin position="15"/>
        <end position="18"/>
    </location>
    <ligand>
        <name>NAD(+)</name>
        <dbReference type="ChEBI" id="CHEBI:57540"/>
    </ligand>
</feature>
<feature type="binding site" evidence="3 8">
    <location>
        <position position="38"/>
    </location>
    <ligand>
        <name>NAD(+)</name>
        <dbReference type="ChEBI" id="CHEBI:57540"/>
    </ligand>
</feature>
<feature type="binding site" evidence="3 8">
    <location>
        <position position="42"/>
    </location>
    <ligand>
        <name>NAD(+)</name>
        <dbReference type="ChEBI" id="CHEBI:57540"/>
    </ligand>
</feature>
<feature type="binding site" evidence="3 8">
    <location>
        <position position="92"/>
    </location>
    <ligand>
        <name>NAD(+)</name>
        <dbReference type="ChEBI" id="CHEBI:57540"/>
    </ligand>
</feature>
<feature type="binding site" evidence="1">
    <location>
        <position position="144"/>
    </location>
    <ligand>
        <name>substrate</name>
    </ligand>
</feature>
<feature type="binding site" evidence="3 8">
    <location>
        <position position="161"/>
    </location>
    <ligand>
        <name>NAD(+)</name>
        <dbReference type="ChEBI" id="CHEBI:57540"/>
    </ligand>
</feature>
<feature type="binding site" evidence="3 8">
    <location>
        <begin position="190"/>
        <end position="192"/>
    </location>
    <ligand>
        <name>NAD(+)</name>
        <dbReference type="ChEBI" id="CHEBI:57540"/>
    </ligand>
</feature>
<feature type="mutagenesis site" description="Improves utilization of NADP(+) as cosubstrate by 10-fold compared to wild-type. Displays 6-fold increase in affinity for NADP(+)." evidence="3">
    <original>E</original>
    <variation>A</variation>
    <location>
        <position position="42"/>
    </location>
</feature>
<feature type="turn" evidence="9">
    <location>
        <begin position="3"/>
        <end position="6"/>
    </location>
</feature>
<feature type="strand" evidence="9">
    <location>
        <begin position="8"/>
        <end position="11"/>
    </location>
</feature>
<feature type="turn" evidence="9">
    <location>
        <begin position="12"/>
        <end position="15"/>
    </location>
</feature>
<feature type="helix" evidence="9">
    <location>
        <begin position="17"/>
        <end position="28"/>
    </location>
</feature>
<feature type="strand" evidence="9">
    <location>
        <begin position="32"/>
        <end position="36"/>
    </location>
</feature>
<feature type="helix" evidence="9">
    <location>
        <begin position="40"/>
        <end position="53"/>
    </location>
</feature>
<feature type="strand" evidence="9">
    <location>
        <begin position="60"/>
        <end position="62"/>
    </location>
</feature>
<feature type="helix" evidence="9">
    <location>
        <begin position="69"/>
        <end position="83"/>
    </location>
</feature>
<feature type="strand" evidence="9">
    <location>
        <begin position="88"/>
        <end position="91"/>
    </location>
</feature>
<feature type="helix" evidence="9">
    <location>
        <begin position="101"/>
        <end position="103"/>
    </location>
</feature>
<feature type="helix" evidence="9">
    <location>
        <begin position="106"/>
        <end position="116"/>
    </location>
</feature>
<feature type="helix" evidence="9">
    <location>
        <begin position="118"/>
        <end position="131"/>
    </location>
</feature>
<feature type="turn" evidence="9">
    <location>
        <begin position="132"/>
        <end position="135"/>
    </location>
</feature>
<feature type="strand" evidence="9">
    <location>
        <begin position="137"/>
        <end position="142"/>
    </location>
</feature>
<feature type="helix" evidence="10">
    <location>
        <begin position="146"/>
        <end position="149"/>
    </location>
</feature>
<feature type="helix" evidence="9">
    <location>
        <begin position="160"/>
        <end position="174"/>
    </location>
</feature>
<feature type="helix" evidence="9">
    <location>
        <begin position="176"/>
        <end position="178"/>
    </location>
</feature>
<feature type="strand" evidence="9">
    <location>
        <begin position="180"/>
        <end position="187"/>
    </location>
</feature>
<feature type="helix" evidence="10">
    <location>
        <begin position="193"/>
        <end position="196"/>
    </location>
</feature>
<feature type="helix" evidence="10">
    <location>
        <begin position="200"/>
        <end position="209"/>
    </location>
</feature>
<feature type="helix" evidence="9">
    <location>
        <begin position="218"/>
        <end position="229"/>
    </location>
</feature>
<feature type="helix" evidence="9">
    <location>
        <begin position="231"/>
        <end position="233"/>
    </location>
</feature>
<feature type="strand" evidence="9">
    <location>
        <begin position="238"/>
        <end position="243"/>
    </location>
</feature>
<name>BAIA2_CLOSV</name>
<proteinExistence type="evidence at protein level"/>
<organism>
    <name type="scientific">Clostridium scindens (strain JCM 10418 / VPI 12708)</name>
    <dbReference type="NCBI Taxonomy" id="29347"/>
    <lineage>
        <taxon>Bacteria</taxon>
        <taxon>Bacillati</taxon>
        <taxon>Bacillota</taxon>
        <taxon>Clostridia</taxon>
        <taxon>Lachnospirales</taxon>
        <taxon>Lachnospiraceae</taxon>
    </lineage>
</organism>
<reference key="1">
    <citation type="journal article" date="1990" name="J. Bacteriol.">
        <title>Cloning and sequencing of a bile acid-inducible operon from Eubacterium sp. strain VPI 12708.</title>
        <authorList>
            <person name="Mallonee D.H."/>
            <person name="White W.B."/>
            <person name="Hylemon P.B."/>
        </authorList>
    </citation>
    <scope>NUCLEOTIDE SEQUENCE [GENOMIC DNA]</scope>
</reference>
<reference key="2">
    <citation type="journal article" date="1990" name="J. Bacteriol.">
        <title>Multiple copies of a bile acid-inducible gene in Eubacterium sp. strain VPI 12708.</title>
        <authorList>
            <person name="Gopal-Srivastava R."/>
            <person name="Mallonee D.H."/>
            <person name="White W.B."/>
            <person name="Hylemon P.B."/>
        </authorList>
    </citation>
    <scope>NUCLEOTIDE SEQUENCE [GENOMIC DNA]</scope>
</reference>
<reference key="3">
    <citation type="journal article" date="1988" name="J. Bacteriol.">
        <title>Evidence for a multigene family involved in bile acid 7-dehydroxylation in Eubacterium sp. strain VPI 12708.</title>
        <authorList>
            <person name="White W.B."/>
            <person name="Franklund C.V."/>
            <person name="Coleman J.P."/>
            <person name="Hylemon P.B."/>
        </authorList>
    </citation>
    <scope>NUCLEOTIDE SEQUENCE [GENOMIC DNA]</scope>
</reference>
<reference key="4">
    <citation type="journal article" date="2006" name="J. Lipid Res.">
        <title>Bile salt biotransformations by human intestinal bacteria.</title>
        <authorList>
            <person name="Ridlon J.M."/>
            <person name="Kang D.J."/>
            <person name="Hylemon P.B."/>
        </authorList>
    </citation>
    <scope>REVIEW</scope>
    <scope>FUNCTION</scope>
    <scope>INDUCTION</scope>
    <scope>PATHWAY</scope>
</reference>
<reference key="5">
    <citation type="journal article" date="2014" name="Proteins">
        <title>Structural and functional characterization of BaiA, an enzyme involved in secondary bile acid synthesis in human gut microbe.</title>
        <authorList>
            <person name="Bhowmik S."/>
            <person name="Jones D.H."/>
            <person name="Chiu H.P."/>
            <person name="Park I.H."/>
            <person name="Chiu H.J."/>
            <person name="Axelrod H.L."/>
            <person name="Farr C.L."/>
            <person name="Tien H.J."/>
            <person name="Agarwalla S."/>
            <person name="Lesley S.A."/>
        </authorList>
    </citation>
    <scope>X-RAY CRYSTALLOGRAPHY (1.8 ANGSTROMS) OF APOENZYME AND IN COMPLEX WITH NAD</scope>
    <scope>FUNCTION</scope>
    <scope>CATALYTIC ACTIVITY</scope>
    <scope>SUBSTRATE SPECIFICITY</scope>
    <scope>BIOPHYSICOCHEMICAL PROPERTIES</scope>
    <scope>SUBUNIT</scope>
    <scope>REACTION MECHANISM</scope>
    <scope>ACTIVE SITE</scope>
    <scope>MUTAGENESIS OF GLU-42</scope>
    <source>
        <strain>JCM 10418 / VPI 12708</strain>
    </source>
</reference>
<comment type="function">
    <text evidence="3 4">Involved in the multi-step bile acid 7alpha-dehydroxylation pathway that transforms primary bile acids to secondary bile acids in the human gut (PubMed:16299351, PubMed:23836456). Catalyzes the oxidation of C3-hydroxyl group of CoA conjugated bile acids generating a C3-oxo bile acid intermediate. Can use choloyl-CoA, chenodeoxycholoyl-CoA, deoxycholoyl-CoA, and lithocholoyl-CoA as substrates with similar efficiency. Highly prefers NAD over NADP as cosubstrate. Also catalyzes the reverse reactions; in vitro, the preferred direction of reaction depends on the pH. Has very little activity with unconjugated (non-CoA) bile acid substrates (PubMed:23836456).</text>
</comment>
<comment type="catalytic activity">
    <reaction evidence="3">
        <text>a 3alpha-hydroxy bile acid CoA + NAD(+) = a 3-oxo bile acid CoA + NADH + H(+)</text>
        <dbReference type="Rhea" id="RHEA:55380"/>
        <dbReference type="ChEBI" id="CHEBI:15378"/>
        <dbReference type="ChEBI" id="CHEBI:57540"/>
        <dbReference type="ChEBI" id="CHEBI:57945"/>
        <dbReference type="ChEBI" id="CHEBI:138842"/>
        <dbReference type="ChEBI" id="CHEBI:138843"/>
        <dbReference type="EC" id="1.1.1.395"/>
    </reaction>
</comment>
<comment type="catalytic activity">
    <reaction evidence="3">
        <text>choloyl-CoA + NAD(+) = 7alpha,12alpha-dihydroxy-3-oxochol-24-oyl-CoA + NADH + H(+)</text>
        <dbReference type="Rhea" id="RHEA:52588"/>
        <dbReference type="ChEBI" id="CHEBI:15378"/>
        <dbReference type="ChEBI" id="CHEBI:57373"/>
        <dbReference type="ChEBI" id="CHEBI:57540"/>
        <dbReference type="ChEBI" id="CHEBI:57945"/>
        <dbReference type="ChEBI" id="CHEBI:136700"/>
        <dbReference type="EC" id="1.1.1.395"/>
    </reaction>
</comment>
<comment type="catalytic activity">
    <reaction evidence="3">
        <text>chenodeoxycholoyl-CoA + NAD(+) = 7alpha-hydroxy-3-oxochol-24-oyl-CoA + NADH + H(+)</text>
        <dbReference type="Rhea" id="RHEA:52584"/>
        <dbReference type="ChEBI" id="CHEBI:15378"/>
        <dbReference type="ChEBI" id="CHEBI:57540"/>
        <dbReference type="ChEBI" id="CHEBI:57945"/>
        <dbReference type="ChEBI" id="CHEBI:62989"/>
        <dbReference type="ChEBI" id="CHEBI:136698"/>
        <dbReference type="EC" id="1.1.1.395"/>
    </reaction>
</comment>
<comment type="catalytic activity">
    <reaction evidence="3">
        <text>deoxycholoyl-CoA + NAD(+) = 12alpha-hydroxy-3-oxocholan-24-oyl-CoA + NADH + H(+)</text>
        <dbReference type="Rhea" id="RHEA:52592"/>
        <dbReference type="ChEBI" id="CHEBI:15378"/>
        <dbReference type="ChEBI" id="CHEBI:57540"/>
        <dbReference type="ChEBI" id="CHEBI:57945"/>
        <dbReference type="ChEBI" id="CHEBI:58810"/>
        <dbReference type="ChEBI" id="CHEBI:136701"/>
        <dbReference type="EC" id="1.1.1.395"/>
    </reaction>
</comment>
<comment type="catalytic activity">
    <reaction evidence="3">
        <text>lithocholoyl-CoA + NAD(+) = 3-oxocholan-24-oyl-CoA + NADH + H(+)</text>
        <dbReference type="Rhea" id="RHEA:52596"/>
        <dbReference type="ChEBI" id="CHEBI:15378"/>
        <dbReference type="ChEBI" id="CHEBI:57540"/>
        <dbReference type="ChEBI" id="CHEBI:57945"/>
        <dbReference type="ChEBI" id="CHEBI:87438"/>
        <dbReference type="ChEBI" id="CHEBI:136703"/>
        <dbReference type="EC" id="1.1.1.395"/>
    </reaction>
</comment>
<comment type="biophysicochemical properties">
    <kinetics>
        <KM evidence="3">32 uM for choloyl-CoA (at pH 8.7 and 37 degrees Celsius)</KM>
        <KM evidence="3">23 uM for chenodeoxycholoyl-CoA (at pH 8.7 and 37 degrees Celsius)</KM>
        <KM evidence="3">18 uM for lithocholoyl-CoA (at pH 8.7 and 37 degrees Celsius)</KM>
        <KM evidence="3">17 uM for deoxycholoyl-CoA (at pH 8.7 and 37 degrees Celsius)</KM>
        <KM evidence="3">1.8 uM for 3-oxocholoyl-CoA (at pH 8.7 and 37 degrees Celsius)</KM>
        <KM evidence="3">1.1 uM for 3-oxochenodeoxycholoyl-CoA (at pH 8.7 and 37 degrees Celsius)</KM>
        <KM evidence="3">1.3 uM for 3-oxolithocholoyl-CoA (at pH 8.7 and 37 degrees Celsius)</KM>
        <KM evidence="3">1.5 uM for 3-oxodeoxycholoyl-CoA (at pH 8.7 and 37 degrees Celsius)</KM>
        <KM evidence="3">6.7 uM for NAD(+) (at pH 8.7 and 37 degrees Celsius)</KM>
        <KM evidence="3">84 uM for NADP(+) (at pH 8.7 and 37 degrees Celsius)</KM>
        <text evidence="3">kcat is 10 min(-1) with choloyl-CoA as substrate. kcat is 12 min(-1) with chenodeoxycholoyl-CoA as substrate. kcat is 11 min(-1) with lithocholoyl-CoA as substrate. kcat is 9.5 min(-1) with deoxycholoyl-CoA as substrate. kcat is 8.3 min(-1) with 3-oxocholoyl-CoA as substrate. kcat is 10 min(-1) with 3-oxochenodeoxycholoyl-CoA as substrate. kcat is 7.3 min(-1) with 3-oxolithocholoyl-CoA as substrate. kcat is 9.1 min(-1) with 3-oxodeoxycholoyl-CoA as substrate (at pH 8.7 and 37 degrees Celsius).</text>
    </kinetics>
    <phDependence>
        <text evidence="3">The direction of reaction is pH dependent in vitro. At pH 7.3, clearly the reduction reaction is preferred with an order of magnitude higher velocity than the oxidation reaction. At pH 8.7, the velocities of the oxidation and reduction reaction are comparable. At pH 9.9 the velocity of the reduction reaction is about 60% of oxidation reaction.</text>
    </phDependence>
</comment>
<comment type="pathway">
    <text evidence="4 7">Lipid metabolism; bile acid biosynthesis.</text>
</comment>
<comment type="subunit">
    <text evidence="3">Homotetramer.</text>
</comment>
<comment type="induction">
    <text evidence="4">Induced by the C24 primary bile acids cholic acid (CA) and chenodeoxycholic acid (CDCA).</text>
</comment>
<comment type="miscellaneous">
    <text evidence="6">There are three genes for BaiA proteins: baiA1 is identical to baiA3 and encodes a polypeptide sharing 92% identity with baiA2 gene product.</text>
</comment>
<comment type="miscellaneous">
    <text evidence="7">Reaction mechanism seems to proceed via a nicotinamide-OH(-) adduct, which is proposed to be involved in proton relay instead of hydride transfer.</text>
</comment>
<comment type="similarity">
    <text evidence="6">Belongs to the short-chain dehydrogenases/reductases (SDR) family.</text>
</comment>
<sequence length="249" mass="26538">MNLVQDKVTIITGGTRGIGFAAAKIFIDNGAKVSIFGETQEEVDTALAQLKELYPEEEVLGFAPDLTSRDAVMAAVGQVAQKYGRLDVMINNAGITSNNVFSRVSEEEFKHIMDINVTGVFNGAWCAYQCMKDAKKGVIINTASVTGIFGSLSGVGYPASKASVIGLTHGLGREIIRKNIRVVGVAPGVVNTDMTNGNPPEIMEGYLKALPMKRMLEPEEIANVYLFLASDLASGITATTVSVDGAYRP</sequence>
<protein>
    <recommendedName>
        <fullName evidence="7">3alpha-hydroxy bile acid-CoA-ester 3-dehydrogenase 2</fullName>
        <ecNumber evidence="3">1.1.1.395</ecNumber>
    </recommendedName>
    <alternativeName>
        <fullName evidence="4 5">3alpha-hydroxysteroid dehydrogenase 2</fullName>
        <shortName evidence="4">3alpha-HSDH 2</shortName>
    </alternativeName>
    <alternativeName>
        <fullName evidence="4">Bile acid-inducible protein BaiA2</fullName>
    </alternativeName>
</protein>
<dbReference type="EC" id="1.1.1.395" evidence="3"/>
<dbReference type="EMBL" id="M22623">
    <property type="protein sequence ID" value="AAB61150.1"/>
    <property type="molecule type" value="Genomic_DNA"/>
</dbReference>
<dbReference type="EMBL" id="U57489">
    <property type="protein sequence ID" value="AAC45414.1"/>
    <property type="molecule type" value="Genomic_DNA"/>
</dbReference>
<dbReference type="PIR" id="A31841">
    <property type="entry name" value="A31841"/>
</dbReference>
<dbReference type="RefSeq" id="WP_025645822.1">
    <property type="nucleotide sequence ID" value="NZ_CANSEQ010000038.1"/>
</dbReference>
<dbReference type="PDB" id="4IS2">
    <property type="method" value="X-ray"/>
    <property type="resolution" value="1.90 A"/>
    <property type="chains" value="A=1-249"/>
</dbReference>
<dbReference type="PDB" id="4IS3">
    <property type="method" value="X-ray"/>
    <property type="resolution" value="2.00 A"/>
    <property type="chains" value="A/B/C/D=1-249"/>
</dbReference>
<dbReference type="PDBsum" id="4IS2"/>
<dbReference type="PDBsum" id="4IS3"/>
<dbReference type="SMR" id="P19337"/>
<dbReference type="SwissLipids" id="SLP:000001731"/>
<dbReference type="BioCyc" id="MetaCyc:BAIA2EUBSP-MONOMER"/>
<dbReference type="BRENDA" id="1.1.1.395">
    <property type="organism ID" value="1513"/>
</dbReference>
<dbReference type="UniPathway" id="UPA00221"/>
<dbReference type="EvolutionaryTrace" id="P19337"/>
<dbReference type="GO" id="GO:0005737">
    <property type="term" value="C:cytoplasm"/>
    <property type="evidence" value="ECO:0000305"/>
    <property type="project" value="UniProt"/>
</dbReference>
<dbReference type="GO" id="GO:0033792">
    <property type="term" value="F:3alpha-hydroxy bile acid-CoA-ester 3-dehydrogenase activity"/>
    <property type="evidence" value="ECO:0000314"/>
    <property type="project" value="UniProt"/>
</dbReference>
<dbReference type="GO" id="GO:0032052">
    <property type="term" value="F:bile acid binding"/>
    <property type="evidence" value="ECO:0000314"/>
    <property type="project" value="UniProtKB"/>
</dbReference>
<dbReference type="GO" id="GO:0070403">
    <property type="term" value="F:NAD+ binding"/>
    <property type="evidence" value="ECO:0000314"/>
    <property type="project" value="UniProtKB"/>
</dbReference>
<dbReference type="GO" id="GO:0016616">
    <property type="term" value="F:oxidoreductase activity, acting on the CH-OH group of donors, NAD or NADP as acceptor"/>
    <property type="evidence" value="ECO:0000314"/>
    <property type="project" value="UniProt"/>
</dbReference>
<dbReference type="GO" id="GO:0033764">
    <property type="term" value="F:steroid dehydrogenase activity, acting on the CH-OH group of donors, NAD or NADP as acceptor"/>
    <property type="evidence" value="ECO:0000314"/>
    <property type="project" value="UniProtKB"/>
</dbReference>
<dbReference type="GO" id="GO:0006699">
    <property type="term" value="P:bile acid biosynthetic process"/>
    <property type="evidence" value="ECO:0007669"/>
    <property type="project" value="UniProtKB-UniPathway"/>
</dbReference>
<dbReference type="GO" id="GO:0030573">
    <property type="term" value="P:bile acid catabolic process"/>
    <property type="evidence" value="ECO:0000314"/>
    <property type="project" value="UniProt"/>
</dbReference>
<dbReference type="GO" id="GO:0008206">
    <property type="term" value="P:bile acid metabolic process"/>
    <property type="evidence" value="ECO:0000314"/>
    <property type="project" value="UniProtKB"/>
</dbReference>
<dbReference type="GO" id="GO:0051289">
    <property type="term" value="P:protein homotetramerization"/>
    <property type="evidence" value="ECO:0000314"/>
    <property type="project" value="UniProtKB"/>
</dbReference>
<dbReference type="GO" id="GO:1903412">
    <property type="term" value="P:response to bile acid"/>
    <property type="evidence" value="ECO:0000304"/>
    <property type="project" value="UniProtKB"/>
</dbReference>
<dbReference type="FunFam" id="3.40.50.720:FF:001083">
    <property type="entry name" value="Bile acid 7-dehydroxylase 1/3"/>
    <property type="match status" value="1"/>
</dbReference>
<dbReference type="Gene3D" id="3.40.50.720">
    <property type="entry name" value="NAD(P)-binding Rossmann-like Domain"/>
    <property type="match status" value="1"/>
</dbReference>
<dbReference type="InterPro" id="IPR036291">
    <property type="entry name" value="NAD(P)-bd_dom_sf"/>
</dbReference>
<dbReference type="InterPro" id="IPR020904">
    <property type="entry name" value="Sc_DH/Rdtase_CS"/>
</dbReference>
<dbReference type="InterPro" id="IPR050259">
    <property type="entry name" value="SDR"/>
</dbReference>
<dbReference type="InterPro" id="IPR002347">
    <property type="entry name" value="SDR_fam"/>
</dbReference>
<dbReference type="PANTHER" id="PTHR42879">
    <property type="entry name" value="3-OXOACYL-(ACYL-CARRIER-PROTEIN) REDUCTASE"/>
    <property type="match status" value="1"/>
</dbReference>
<dbReference type="PANTHER" id="PTHR42879:SF2">
    <property type="entry name" value="3-OXOACYL-[ACYL-CARRIER-PROTEIN] REDUCTASE FABG"/>
    <property type="match status" value="1"/>
</dbReference>
<dbReference type="Pfam" id="PF00106">
    <property type="entry name" value="adh_short"/>
    <property type="match status" value="1"/>
</dbReference>
<dbReference type="PRINTS" id="PR00081">
    <property type="entry name" value="GDHRDH"/>
</dbReference>
<dbReference type="PRINTS" id="PR00080">
    <property type="entry name" value="SDRFAMILY"/>
</dbReference>
<dbReference type="SUPFAM" id="SSF51735">
    <property type="entry name" value="NAD(P)-binding Rossmann-fold domains"/>
    <property type="match status" value="1"/>
</dbReference>
<dbReference type="PROSITE" id="PS00061">
    <property type="entry name" value="ADH_SHORT"/>
    <property type="match status" value="1"/>
</dbReference>
<accession>P19337</accession>